<accession>Q982W9</accession>
<dbReference type="EMBL" id="BA000012">
    <property type="protein sequence ID" value="BAB54337.1"/>
    <property type="molecule type" value="Genomic_DNA"/>
</dbReference>
<dbReference type="RefSeq" id="WP_010915637.1">
    <property type="nucleotide sequence ID" value="NC_002678.2"/>
</dbReference>
<dbReference type="SMR" id="Q982W9"/>
<dbReference type="GeneID" id="66684524"/>
<dbReference type="KEGG" id="mlo:mll8456"/>
<dbReference type="eggNOG" id="COG0103">
    <property type="taxonomic scope" value="Bacteria"/>
</dbReference>
<dbReference type="HOGENOM" id="CLU_046483_2_0_5"/>
<dbReference type="Proteomes" id="UP000000552">
    <property type="component" value="Chromosome"/>
</dbReference>
<dbReference type="GO" id="GO:0022627">
    <property type="term" value="C:cytosolic small ribosomal subunit"/>
    <property type="evidence" value="ECO:0007669"/>
    <property type="project" value="TreeGrafter"/>
</dbReference>
<dbReference type="GO" id="GO:0003723">
    <property type="term" value="F:RNA binding"/>
    <property type="evidence" value="ECO:0007669"/>
    <property type="project" value="TreeGrafter"/>
</dbReference>
<dbReference type="GO" id="GO:0003735">
    <property type="term" value="F:structural constituent of ribosome"/>
    <property type="evidence" value="ECO:0007669"/>
    <property type="project" value="InterPro"/>
</dbReference>
<dbReference type="GO" id="GO:0006412">
    <property type="term" value="P:translation"/>
    <property type="evidence" value="ECO:0007669"/>
    <property type="project" value="UniProtKB-UniRule"/>
</dbReference>
<dbReference type="FunFam" id="3.30.230.10:FF:000001">
    <property type="entry name" value="30S ribosomal protein S9"/>
    <property type="match status" value="1"/>
</dbReference>
<dbReference type="Gene3D" id="3.30.230.10">
    <property type="match status" value="1"/>
</dbReference>
<dbReference type="HAMAP" id="MF_00532_B">
    <property type="entry name" value="Ribosomal_uS9_B"/>
    <property type="match status" value="1"/>
</dbReference>
<dbReference type="InterPro" id="IPR020568">
    <property type="entry name" value="Ribosomal_Su5_D2-typ_SF"/>
</dbReference>
<dbReference type="InterPro" id="IPR000754">
    <property type="entry name" value="Ribosomal_uS9"/>
</dbReference>
<dbReference type="InterPro" id="IPR023035">
    <property type="entry name" value="Ribosomal_uS9_bac/plastid"/>
</dbReference>
<dbReference type="InterPro" id="IPR020574">
    <property type="entry name" value="Ribosomal_uS9_CS"/>
</dbReference>
<dbReference type="InterPro" id="IPR014721">
    <property type="entry name" value="Ribsml_uS5_D2-typ_fold_subgr"/>
</dbReference>
<dbReference type="NCBIfam" id="NF001099">
    <property type="entry name" value="PRK00132.1"/>
    <property type="match status" value="1"/>
</dbReference>
<dbReference type="PANTHER" id="PTHR21569">
    <property type="entry name" value="RIBOSOMAL PROTEIN S9"/>
    <property type="match status" value="1"/>
</dbReference>
<dbReference type="PANTHER" id="PTHR21569:SF1">
    <property type="entry name" value="SMALL RIBOSOMAL SUBUNIT PROTEIN US9M"/>
    <property type="match status" value="1"/>
</dbReference>
<dbReference type="Pfam" id="PF00380">
    <property type="entry name" value="Ribosomal_S9"/>
    <property type="match status" value="1"/>
</dbReference>
<dbReference type="SUPFAM" id="SSF54211">
    <property type="entry name" value="Ribosomal protein S5 domain 2-like"/>
    <property type="match status" value="1"/>
</dbReference>
<dbReference type="PROSITE" id="PS00360">
    <property type="entry name" value="RIBOSOMAL_S9"/>
    <property type="match status" value="1"/>
</dbReference>
<evidence type="ECO:0000255" key="1">
    <source>
        <dbReference type="HAMAP-Rule" id="MF_00532"/>
    </source>
</evidence>
<evidence type="ECO:0000305" key="2"/>
<gene>
    <name evidence="1" type="primary">rpsI</name>
    <name type="ordered locus">mll8456</name>
</gene>
<proteinExistence type="inferred from homology"/>
<feature type="chain" id="PRO_0000111395" description="Small ribosomal subunit protein uS9">
    <location>
        <begin position="1"/>
        <end position="160"/>
    </location>
</feature>
<reference key="1">
    <citation type="journal article" date="2000" name="DNA Res.">
        <title>Complete genome structure of the nitrogen-fixing symbiotic bacterium Mesorhizobium loti.</title>
        <authorList>
            <person name="Kaneko T."/>
            <person name="Nakamura Y."/>
            <person name="Sato S."/>
            <person name="Asamizu E."/>
            <person name="Kato T."/>
            <person name="Sasamoto S."/>
            <person name="Watanabe A."/>
            <person name="Idesawa K."/>
            <person name="Ishikawa A."/>
            <person name="Kawashima K."/>
            <person name="Kimura T."/>
            <person name="Kishida Y."/>
            <person name="Kiyokawa C."/>
            <person name="Kohara M."/>
            <person name="Matsumoto M."/>
            <person name="Matsuno A."/>
            <person name="Mochizuki Y."/>
            <person name="Nakayama S."/>
            <person name="Nakazaki N."/>
            <person name="Shimpo S."/>
            <person name="Sugimoto M."/>
            <person name="Takeuchi C."/>
            <person name="Yamada M."/>
            <person name="Tabata S."/>
        </authorList>
    </citation>
    <scope>NUCLEOTIDE SEQUENCE [LARGE SCALE GENOMIC DNA]</scope>
    <source>
        <strain>LMG 29417 / CECT 9101 / MAFF 303099</strain>
    </source>
</reference>
<sequence length="160" mass="17250">MAELSSLAELGAATGNTNTQAAAPVHVQKLDKSGRAYATGKRKNAIARVWVKPGSGKIVVNDKEFATYFARPVLQMILNQPIIASNRSGQYDIVATVVGGGLSGQAGAVRHGISKALTYYEPALRAVLKKGGFLTRDSRVVERKKYGKAKARRSFQFSKR</sequence>
<keyword id="KW-0687">Ribonucleoprotein</keyword>
<keyword id="KW-0689">Ribosomal protein</keyword>
<comment type="similarity">
    <text evidence="1">Belongs to the universal ribosomal protein uS9 family.</text>
</comment>
<protein>
    <recommendedName>
        <fullName evidence="1">Small ribosomal subunit protein uS9</fullName>
    </recommendedName>
    <alternativeName>
        <fullName evidence="2">30S ribosomal protein S9</fullName>
    </alternativeName>
</protein>
<name>RS9_RHILO</name>
<organism>
    <name type="scientific">Mesorhizobium japonicum (strain LMG 29417 / CECT 9101 / MAFF 303099)</name>
    <name type="common">Mesorhizobium loti (strain MAFF 303099)</name>
    <dbReference type="NCBI Taxonomy" id="266835"/>
    <lineage>
        <taxon>Bacteria</taxon>
        <taxon>Pseudomonadati</taxon>
        <taxon>Pseudomonadota</taxon>
        <taxon>Alphaproteobacteria</taxon>
        <taxon>Hyphomicrobiales</taxon>
        <taxon>Phyllobacteriaceae</taxon>
        <taxon>Mesorhizobium</taxon>
    </lineage>
</organism>